<keyword id="KW-0333">Golgi apparatus</keyword>
<keyword id="KW-0472">Membrane</keyword>
<keyword id="KW-0653">Protein transport</keyword>
<keyword id="KW-1185">Reference proteome</keyword>
<keyword id="KW-0812">Transmembrane</keyword>
<keyword id="KW-1133">Transmembrane helix</keyword>
<keyword id="KW-0813">Transport</keyword>
<evidence type="ECO:0000250" key="1"/>
<evidence type="ECO:0000255" key="2"/>
<evidence type="ECO:0000305" key="3"/>
<name>SYS1_MOUSE</name>
<reference key="1">
    <citation type="journal article" date="2005" name="Science">
        <title>The transcriptional landscape of the mammalian genome.</title>
        <authorList>
            <person name="Carninci P."/>
            <person name="Kasukawa T."/>
            <person name="Katayama S."/>
            <person name="Gough J."/>
            <person name="Frith M.C."/>
            <person name="Maeda N."/>
            <person name="Oyama R."/>
            <person name="Ravasi T."/>
            <person name="Lenhard B."/>
            <person name="Wells C."/>
            <person name="Kodzius R."/>
            <person name="Shimokawa K."/>
            <person name="Bajic V.B."/>
            <person name="Brenner S.E."/>
            <person name="Batalov S."/>
            <person name="Forrest A.R."/>
            <person name="Zavolan M."/>
            <person name="Davis M.J."/>
            <person name="Wilming L.G."/>
            <person name="Aidinis V."/>
            <person name="Allen J.E."/>
            <person name="Ambesi-Impiombato A."/>
            <person name="Apweiler R."/>
            <person name="Aturaliya R.N."/>
            <person name="Bailey T.L."/>
            <person name="Bansal M."/>
            <person name="Baxter L."/>
            <person name="Beisel K.W."/>
            <person name="Bersano T."/>
            <person name="Bono H."/>
            <person name="Chalk A.M."/>
            <person name="Chiu K.P."/>
            <person name="Choudhary V."/>
            <person name="Christoffels A."/>
            <person name="Clutterbuck D.R."/>
            <person name="Crowe M.L."/>
            <person name="Dalla E."/>
            <person name="Dalrymple B.P."/>
            <person name="de Bono B."/>
            <person name="Della Gatta G."/>
            <person name="di Bernardo D."/>
            <person name="Down T."/>
            <person name="Engstrom P."/>
            <person name="Fagiolini M."/>
            <person name="Faulkner G."/>
            <person name="Fletcher C.F."/>
            <person name="Fukushima T."/>
            <person name="Furuno M."/>
            <person name="Futaki S."/>
            <person name="Gariboldi M."/>
            <person name="Georgii-Hemming P."/>
            <person name="Gingeras T.R."/>
            <person name="Gojobori T."/>
            <person name="Green R.E."/>
            <person name="Gustincich S."/>
            <person name="Harbers M."/>
            <person name="Hayashi Y."/>
            <person name="Hensch T.K."/>
            <person name="Hirokawa N."/>
            <person name="Hill D."/>
            <person name="Huminiecki L."/>
            <person name="Iacono M."/>
            <person name="Ikeo K."/>
            <person name="Iwama A."/>
            <person name="Ishikawa T."/>
            <person name="Jakt M."/>
            <person name="Kanapin A."/>
            <person name="Katoh M."/>
            <person name="Kawasawa Y."/>
            <person name="Kelso J."/>
            <person name="Kitamura H."/>
            <person name="Kitano H."/>
            <person name="Kollias G."/>
            <person name="Krishnan S.P."/>
            <person name="Kruger A."/>
            <person name="Kummerfeld S.K."/>
            <person name="Kurochkin I.V."/>
            <person name="Lareau L.F."/>
            <person name="Lazarevic D."/>
            <person name="Lipovich L."/>
            <person name="Liu J."/>
            <person name="Liuni S."/>
            <person name="McWilliam S."/>
            <person name="Madan Babu M."/>
            <person name="Madera M."/>
            <person name="Marchionni L."/>
            <person name="Matsuda H."/>
            <person name="Matsuzawa S."/>
            <person name="Miki H."/>
            <person name="Mignone F."/>
            <person name="Miyake S."/>
            <person name="Morris K."/>
            <person name="Mottagui-Tabar S."/>
            <person name="Mulder N."/>
            <person name="Nakano N."/>
            <person name="Nakauchi H."/>
            <person name="Ng P."/>
            <person name="Nilsson R."/>
            <person name="Nishiguchi S."/>
            <person name="Nishikawa S."/>
            <person name="Nori F."/>
            <person name="Ohara O."/>
            <person name="Okazaki Y."/>
            <person name="Orlando V."/>
            <person name="Pang K.C."/>
            <person name="Pavan W.J."/>
            <person name="Pavesi G."/>
            <person name="Pesole G."/>
            <person name="Petrovsky N."/>
            <person name="Piazza S."/>
            <person name="Reed J."/>
            <person name="Reid J.F."/>
            <person name="Ring B.Z."/>
            <person name="Ringwald M."/>
            <person name="Rost B."/>
            <person name="Ruan Y."/>
            <person name="Salzberg S.L."/>
            <person name="Sandelin A."/>
            <person name="Schneider C."/>
            <person name="Schoenbach C."/>
            <person name="Sekiguchi K."/>
            <person name="Semple C.A."/>
            <person name="Seno S."/>
            <person name="Sessa L."/>
            <person name="Sheng Y."/>
            <person name="Shibata Y."/>
            <person name="Shimada H."/>
            <person name="Shimada K."/>
            <person name="Silva D."/>
            <person name="Sinclair B."/>
            <person name="Sperling S."/>
            <person name="Stupka E."/>
            <person name="Sugiura K."/>
            <person name="Sultana R."/>
            <person name="Takenaka Y."/>
            <person name="Taki K."/>
            <person name="Tammoja K."/>
            <person name="Tan S.L."/>
            <person name="Tang S."/>
            <person name="Taylor M.S."/>
            <person name="Tegner J."/>
            <person name="Teichmann S.A."/>
            <person name="Ueda H.R."/>
            <person name="van Nimwegen E."/>
            <person name="Verardo R."/>
            <person name="Wei C.L."/>
            <person name="Yagi K."/>
            <person name="Yamanishi H."/>
            <person name="Zabarovsky E."/>
            <person name="Zhu S."/>
            <person name="Zimmer A."/>
            <person name="Hide W."/>
            <person name="Bult C."/>
            <person name="Grimmond S.M."/>
            <person name="Teasdale R.D."/>
            <person name="Liu E.T."/>
            <person name="Brusic V."/>
            <person name="Quackenbush J."/>
            <person name="Wahlestedt C."/>
            <person name="Mattick J.S."/>
            <person name="Hume D.A."/>
            <person name="Kai C."/>
            <person name="Sasaki D."/>
            <person name="Tomaru Y."/>
            <person name="Fukuda S."/>
            <person name="Kanamori-Katayama M."/>
            <person name="Suzuki M."/>
            <person name="Aoki J."/>
            <person name="Arakawa T."/>
            <person name="Iida J."/>
            <person name="Imamura K."/>
            <person name="Itoh M."/>
            <person name="Kato T."/>
            <person name="Kawaji H."/>
            <person name="Kawagashira N."/>
            <person name="Kawashima T."/>
            <person name="Kojima M."/>
            <person name="Kondo S."/>
            <person name="Konno H."/>
            <person name="Nakano K."/>
            <person name="Ninomiya N."/>
            <person name="Nishio T."/>
            <person name="Okada M."/>
            <person name="Plessy C."/>
            <person name="Shibata K."/>
            <person name="Shiraki T."/>
            <person name="Suzuki S."/>
            <person name="Tagami M."/>
            <person name="Waki K."/>
            <person name="Watahiki A."/>
            <person name="Okamura-Oho Y."/>
            <person name="Suzuki H."/>
            <person name="Kawai J."/>
            <person name="Hayashizaki Y."/>
        </authorList>
    </citation>
    <scope>NUCLEOTIDE SEQUENCE [LARGE SCALE MRNA]</scope>
    <source>
        <strain>C57BL/6J</strain>
        <tissue>Pancreas</tissue>
        <tissue>Placenta</tissue>
        <tissue>Spleen</tissue>
    </source>
</reference>
<reference key="2">
    <citation type="journal article" date="2004" name="Genome Res.">
        <title>The status, quality, and expansion of the NIH full-length cDNA project: the Mammalian Gene Collection (MGC).</title>
        <authorList>
            <consortium name="The MGC Project Team"/>
        </authorList>
    </citation>
    <scope>NUCLEOTIDE SEQUENCE [LARGE SCALE MRNA]</scope>
    <source>
        <tissue>Brain</tissue>
    </source>
</reference>
<dbReference type="EMBL" id="AK003071">
    <property type="protein sequence ID" value="BAB22547.1"/>
    <property type="molecule type" value="mRNA"/>
</dbReference>
<dbReference type="EMBL" id="AK005510">
    <property type="protein sequence ID" value="BAB24089.1"/>
    <property type="molecule type" value="mRNA"/>
</dbReference>
<dbReference type="EMBL" id="AK075770">
    <property type="protein sequence ID" value="BAC35944.1"/>
    <property type="molecule type" value="mRNA"/>
</dbReference>
<dbReference type="EMBL" id="AK148305">
    <property type="protein sequence ID" value="BAE28468.1"/>
    <property type="molecule type" value="mRNA"/>
</dbReference>
<dbReference type="EMBL" id="BC061084">
    <property type="protein sequence ID" value="AAH61084.1"/>
    <property type="molecule type" value="mRNA"/>
</dbReference>
<dbReference type="CCDS" id="CCDS50793.1"/>
<dbReference type="RefSeq" id="NP_079851.2">
    <property type="nucleotide sequence ID" value="NM_025575.4"/>
</dbReference>
<dbReference type="RefSeq" id="XP_011238034.1">
    <property type="nucleotide sequence ID" value="XM_011239732.4"/>
</dbReference>
<dbReference type="RefSeq" id="XP_011238035.1">
    <property type="nucleotide sequence ID" value="XM_011239733.3"/>
</dbReference>
<dbReference type="RefSeq" id="XP_036018345.1">
    <property type="nucleotide sequence ID" value="XM_036162452.1"/>
</dbReference>
<dbReference type="RefSeq" id="XP_036018347.1">
    <property type="nucleotide sequence ID" value="XM_036162454.1"/>
</dbReference>
<dbReference type="SMR" id="Q78S06"/>
<dbReference type="BioGRID" id="211490">
    <property type="interactions" value="2"/>
</dbReference>
<dbReference type="FunCoup" id="Q78S06">
    <property type="interactions" value="1942"/>
</dbReference>
<dbReference type="IntAct" id="Q78S06">
    <property type="interactions" value="1"/>
</dbReference>
<dbReference type="STRING" id="10090.ENSMUSP00000104976"/>
<dbReference type="PhosphoSitePlus" id="Q78S06"/>
<dbReference type="PaxDb" id="10090-ENSMUSP00000104976"/>
<dbReference type="PeptideAtlas" id="Q78S06"/>
<dbReference type="ProteomicsDB" id="263191"/>
<dbReference type="Pumba" id="Q78S06"/>
<dbReference type="DNASU" id="66460"/>
<dbReference type="Ensembl" id="ENSMUST00000072452.11">
    <property type="protein sequence ID" value="ENSMUSP00000072275.5"/>
    <property type="gene ID" value="ENSMUSG00000045503.17"/>
</dbReference>
<dbReference type="Ensembl" id="ENSMUST00000109352.8">
    <property type="protein sequence ID" value="ENSMUSP00000104976.2"/>
    <property type="gene ID" value="ENSMUSG00000045503.17"/>
</dbReference>
<dbReference type="Ensembl" id="ENSMUST00000125086.2">
    <property type="protein sequence ID" value="ENSMUSP00000121900.2"/>
    <property type="gene ID" value="ENSMUSG00000045503.17"/>
</dbReference>
<dbReference type="GeneID" id="66460"/>
<dbReference type="KEGG" id="mmu:66460"/>
<dbReference type="UCSC" id="uc008nur.1">
    <property type="organism name" value="mouse"/>
</dbReference>
<dbReference type="AGR" id="MGI:1913710"/>
<dbReference type="CTD" id="90196"/>
<dbReference type="MGI" id="MGI:1913710">
    <property type="gene designation" value="Sys1"/>
</dbReference>
<dbReference type="VEuPathDB" id="HostDB:ENSMUSG00000045503"/>
<dbReference type="eggNOG" id="KOG4697">
    <property type="taxonomic scope" value="Eukaryota"/>
</dbReference>
<dbReference type="GeneTree" id="ENSGT00940000154347"/>
<dbReference type="HOGENOM" id="CLU_081382_2_1_1"/>
<dbReference type="InParanoid" id="Q78S06"/>
<dbReference type="OMA" id="EYEMVGM"/>
<dbReference type="OrthoDB" id="542931at2759"/>
<dbReference type="PhylomeDB" id="Q78S06"/>
<dbReference type="TreeFam" id="TF105875"/>
<dbReference type="Reactome" id="R-MMU-6811440">
    <property type="pathway name" value="Retrograde transport at the Trans-Golgi-Network"/>
</dbReference>
<dbReference type="BioGRID-ORCS" id="66460">
    <property type="hits" value="29 hits in 78 CRISPR screens"/>
</dbReference>
<dbReference type="ChiTaRS" id="Sys1">
    <property type="organism name" value="mouse"/>
</dbReference>
<dbReference type="PRO" id="PR:Q78S06"/>
<dbReference type="Proteomes" id="UP000000589">
    <property type="component" value="Chromosome 2"/>
</dbReference>
<dbReference type="RNAct" id="Q78S06">
    <property type="molecule type" value="protein"/>
</dbReference>
<dbReference type="Bgee" id="ENSMUSG00000045503">
    <property type="expression patterns" value="Expressed in facial nucleus and 256 other cell types or tissues"/>
</dbReference>
<dbReference type="ExpressionAtlas" id="Q78S06">
    <property type="expression patterns" value="baseline and differential"/>
</dbReference>
<dbReference type="GO" id="GO:0000139">
    <property type="term" value="C:Golgi membrane"/>
    <property type="evidence" value="ECO:0007669"/>
    <property type="project" value="UniProtKB-SubCell"/>
</dbReference>
<dbReference type="GO" id="GO:0015031">
    <property type="term" value="P:protein transport"/>
    <property type="evidence" value="ECO:0007669"/>
    <property type="project" value="UniProtKB-KW"/>
</dbReference>
<dbReference type="InterPro" id="IPR016973">
    <property type="entry name" value="Integral_membrane_SYS1"/>
</dbReference>
<dbReference type="InterPro" id="IPR019185">
    <property type="entry name" value="Integral_membrane_SYS1-rel"/>
</dbReference>
<dbReference type="PANTHER" id="PTHR12952:SF0">
    <property type="entry name" value="PROTEIN SYS1 HOMOLOG"/>
    <property type="match status" value="1"/>
</dbReference>
<dbReference type="PANTHER" id="PTHR12952">
    <property type="entry name" value="SYS1"/>
    <property type="match status" value="1"/>
</dbReference>
<dbReference type="Pfam" id="PF09801">
    <property type="entry name" value="SYS1"/>
    <property type="match status" value="1"/>
</dbReference>
<dbReference type="PIRSF" id="PIRSF031402">
    <property type="entry name" value="SYS1_homologue"/>
    <property type="match status" value="1"/>
</dbReference>
<proteinExistence type="evidence at transcript level"/>
<organism>
    <name type="scientific">Mus musculus</name>
    <name type="common">Mouse</name>
    <dbReference type="NCBI Taxonomy" id="10090"/>
    <lineage>
        <taxon>Eukaryota</taxon>
        <taxon>Metazoa</taxon>
        <taxon>Chordata</taxon>
        <taxon>Craniata</taxon>
        <taxon>Vertebrata</taxon>
        <taxon>Euteleostomi</taxon>
        <taxon>Mammalia</taxon>
        <taxon>Eutheria</taxon>
        <taxon>Euarchontoglires</taxon>
        <taxon>Glires</taxon>
        <taxon>Rodentia</taxon>
        <taxon>Myomorpha</taxon>
        <taxon>Muroidea</taxon>
        <taxon>Muridae</taxon>
        <taxon>Murinae</taxon>
        <taxon>Mus</taxon>
        <taxon>Mus</taxon>
    </lineage>
</organism>
<comment type="function">
    <text evidence="1">Involved in protein trafficking. May serve as a receptor for ARFRP1 (By similarity).</text>
</comment>
<comment type="subunit">
    <text evidence="1">Interacts with ARFRP1.</text>
</comment>
<comment type="subcellular location">
    <subcellularLocation>
        <location evidence="1">Golgi apparatus membrane</location>
        <topology evidence="1">Multi-pass membrane protein</topology>
    </subcellularLocation>
</comment>
<comment type="similarity">
    <text evidence="3">Belongs to the SYS1 family.</text>
</comment>
<feature type="chain" id="PRO_0000213941" description="Protein SYS1 homolog">
    <location>
        <begin position="1"/>
        <end position="156"/>
    </location>
</feature>
<feature type="transmembrane region" description="Helical" evidence="2">
    <location>
        <begin position="13"/>
        <end position="33"/>
    </location>
</feature>
<feature type="transmembrane region" description="Helical" evidence="2">
    <location>
        <begin position="65"/>
        <end position="85"/>
    </location>
</feature>
<feature type="transmembrane region" description="Helical" evidence="2">
    <location>
        <begin position="91"/>
        <end position="111"/>
    </location>
</feature>
<feature type="transmembrane region" description="Helical" evidence="2">
    <location>
        <begin position="113"/>
        <end position="133"/>
    </location>
</feature>
<feature type="sequence conflict" description="In Ref. 1; BAB24089." evidence="3" ref="1">
    <original>I</original>
    <variation>V</variation>
    <location>
        <position position="146"/>
    </location>
</feature>
<sequence>MAGQFRSYVWDPLLILSQIVLMQTVYYGSLGLWLALVDALVRSSPSLDQMFDAEILGFSTPPGRLSMMSFVLNALTCALGLLYFIRRGKQCLDFTVTVHFFHLLGCWLYSSRFPSALTWWLVQAVCIALMAVIGEYLCMRTELKEIPLSSAPKSNV</sequence>
<protein>
    <recommendedName>
        <fullName>Protein SYS1 homolog</fullName>
    </recommendedName>
</protein>
<accession>Q78S06</accession>
<accession>Q3UFU1</accession>
<accession>Q9DAU8</accession>
<gene>
    <name type="primary">Sys1</name>
</gene>